<reference key="1">
    <citation type="journal article" date="2005" name="Science">
        <title>The transcriptional landscape of the mammalian genome.</title>
        <authorList>
            <person name="Carninci P."/>
            <person name="Kasukawa T."/>
            <person name="Katayama S."/>
            <person name="Gough J."/>
            <person name="Frith M.C."/>
            <person name="Maeda N."/>
            <person name="Oyama R."/>
            <person name="Ravasi T."/>
            <person name="Lenhard B."/>
            <person name="Wells C."/>
            <person name="Kodzius R."/>
            <person name="Shimokawa K."/>
            <person name="Bajic V.B."/>
            <person name="Brenner S.E."/>
            <person name="Batalov S."/>
            <person name="Forrest A.R."/>
            <person name="Zavolan M."/>
            <person name="Davis M.J."/>
            <person name="Wilming L.G."/>
            <person name="Aidinis V."/>
            <person name="Allen J.E."/>
            <person name="Ambesi-Impiombato A."/>
            <person name="Apweiler R."/>
            <person name="Aturaliya R.N."/>
            <person name="Bailey T.L."/>
            <person name="Bansal M."/>
            <person name="Baxter L."/>
            <person name="Beisel K.W."/>
            <person name="Bersano T."/>
            <person name="Bono H."/>
            <person name="Chalk A.M."/>
            <person name="Chiu K.P."/>
            <person name="Choudhary V."/>
            <person name="Christoffels A."/>
            <person name="Clutterbuck D.R."/>
            <person name="Crowe M.L."/>
            <person name="Dalla E."/>
            <person name="Dalrymple B.P."/>
            <person name="de Bono B."/>
            <person name="Della Gatta G."/>
            <person name="di Bernardo D."/>
            <person name="Down T."/>
            <person name="Engstrom P."/>
            <person name="Fagiolini M."/>
            <person name="Faulkner G."/>
            <person name="Fletcher C.F."/>
            <person name="Fukushima T."/>
            <person name="Furuno M."/>
            <person name="Futaki S."/>
            <person name="Gariboldi M."/>
            <person name="Georgii-Hemming P."/>
            <person name="Gingeras T.R."/>
            <person name="Gojobori T."/>
            <person name="Green R.E."/>
            <person name="Gustincich S."/>
            <person name="Harbers M."/>
            <person name="Hayashi Y."/>
            <person name="Hensch T.K."/>
            <person name="Hirokawa N."/>
            <person name="Hill D."/>
            <person name="Huminiecki L."/>
            <person name="Iacono M."/>
            <person name="Ikeo K."/>
            <person name="Iwama A."/>
            <person name="Ishikawa T."/>
            <person name="Jakt M."/>
            <person name="Kanapin A."/>
            <person name="Katoh M."/>
            <person name="Kawasawa Y."/>
            <person name="Kelso J."/>
            <person name="Kitamura H."/>
            <person name="Kitano H."/>
            <person name="Kollias G."/>
            <person name="Krishnan S.P."/>
            <person name="Kruger A."/>
            <person name="Kummerfeld S.K."/>
            <person name="Kurochkin I.V."/>
            <person name="Lareau L.F."/>
            <person name="Lazarevic D."/>
            <person name="Lipovich L."/>
            <person name="Liu J."/>
            <person name="Liuni S."/>
            <person name="McWilliam S."/>
            <person name="Madan Babu M."/>
            <person name="Madera M."/>
            <person name="Marchionni L."/>
            <person name="Matsuda H."/>
            <person name="Matsuzawa S."/>
            <person name="Miki H."/>
            <person name="Mignone F."/>
            <person name="Miyake S."/>
            <person name="Morris K."/>
            <person name="Mottagui-Tabar S."/>
            <person name="Mulder N."/>
            <person name="Nakano N."/>
            <person name="Nakauchi H."/>
            <person name="Ng P."/>
            <person name="Nilsson R."/>
            <person name="Nishiguchi S."/>
            <person name="Nishikawa S."/>
            <person name="Nori F."/>
            <person name="Ohara O."/>
            <person name="Okazaki Y."/>
            <person name="Orlando V."/>
            <person name="Pang K.C."/>
            <person name="Pavan W.J."/>
            <person name="Pavesi G."/>
            <person name="Pesole G."/>
            <person name="Petrovsky N."/>
            <person name="Piazza S."/>
            <person name="Reed J."/>
            <person name="Reid J.F."/>
            <person name="Ring B.Z."/>
            <person name="Ringwald M."/>
            <person name="Rost B."/>
            <person name="Ruan Y."/>
            <person name="Salzberg S.L."/>
            <person name="Sandelin A."/>
            <person name="Schneider C."/>
            <person name="Schoenbach C."/>
            <person name="Sekiguchi K."/>
            <person name="Semple C.A."/>
            <person name="Seno S."/>
            <person name="Sessa L."/>
            <person name="Sheng Y."/>
            <person name="Shibata Y."/>
            <person name="Shimada H."/>
            <person name="Shimada K."/>
            <person name="Silva D."/>
            <person name="Sinclair B."/>
            <person name="Sperling S."/>
            <person name="Stupka E."/>
            <person name="Sugiura K."/>
            <person name="Sultana R."/>
            <person name="Takenaka Y."/>
            <person name="Taki K."/>
            <person name="Tammoja K."/>
            <person name="Tan S.L."/>
            <person name="Tang S."/>
            <person name="Taylor M.S."/>
            <person name="Tegner J."/>
            <person name="Teichmann S.A."/>
            <person name="Ueda H.R."/>
            <person name="van Nimwegen E."/>
            <person name="Verardo R."/>
            <person name="Wei C.L."/>
            <person name="Yagi K."/>
            <person name="Yamanishi H."/>
            <person name="Zabarovsky E."/>
            <person name="Zhu S."/>
            <person name="Zimmer A."/>
            <person name="Hide W."/>
            <person name="Bult C."/>
            <person name="Grimmond S.M."/>
            <person name="Teasdale R.D."/>
            <person name="Liu E.T."/>
            <person name="Brusic V."/>
            <person name="Quackenbush J."/>
            <person name="Wahlestedt C."/>
            <person name="Mattick J.S."/>
            <person name="Hume D.A."/>
            <person name="Kai C."/>
            <person name="Sasaki D."/>
            <person name="Tomaru Y."/>
            <person name="Fukuda S."/>
            <person name="Kanamori-Katayama M."/>
            <person name="Suzuki M."/>
            <person name="Aoki J."/>
            <person name="Arakawa T."/>
            <person name="Iida J."/>
            <person name="Imamura K."/>
            <person name="Itoh M."/>
            <person name="Kato T."/>
            <person name="Kawaji H."/>
            <person name="Kawagashira N."/>
            <person name="Kawashima T."/>
            <person name="Kojima M."/>
            <person name="Kondo S."/>
            <person name="Konno H."/>
            <person name="Nakano K."/>
            <person name="Ninomiya N."/>
            <person name="Nishio T."/>
            <person name="Okada M."/>
            <person name="Plessy C."/>
            <person name="Shibata K."/>
            <person name="Shiraki T."/>
            <person name="Suzuki S."/>
            <person name="Tagami M."/>
            <person name="Waki K."/>
            <person name="Watahiki A."/>
            <person name="Okamura-Oho Y."/>
            <person name="Suzuki H."/>
            <person name="Kawai J."/>
            <person name="Hayashizaki Y."/>
        </authorList>
    </citation>
    <scope>NUCLEOTIDE SEQUENCE [LARGE SCALE MRNA]</scope>
    <source>
        <strain>C57BL/6J</strain>
        <tissue>Stomach</tissue>
    </source>
</reference>
<reference key="2">
    <citation type="journal article" date="2004" name="Genome Res.">
        <title>The status, quality, and expansion of the NIH full-length cDNA project: the Mammalian Gene Collection (MGC).</title>
        <authorList>
            <consortium name="The MGC Project Team"/>
        </authorList>
    </citation>
    <scope>NUCLEOTIDE SEQUENCE [LARGE SCALE MRNA]</scope>
    <source>
        <strain>C57BL/6J</strain>
        <tissue>Brain</tissue>
    </source>
</reference>
<reference key="3">
    <citation type="journal article" date="2010" name="Cell">
        <title>A tissue-specific atlas of mouse protein phosphorylation and expression.</title>
        <authorList>
            <person name="Huttlin E.L."/>
            <person name="Jedrychowski M.P."/>
            <person name="Elias J.E."/>
            <person name="Goswami T."/>
            <person name="Rad R."/>
            <person name="Beausoleil S.A."/>
            <person name="Villen J."/>
            <person name="Haas W."/>
            <person name="Sowa M.E."/>
            <person name="Gygi S.P."/>
        </authorList>
    </citation>
    <scope>IDENTIFICATION BY MASS SPECTROMETRY [LARGE SCALE ANALYSIS]</scope>
    <source>
        <tissue>Brain</tissue>
        <tissue>Brown adipose tissue</tissue>
        <tissue>Kidney</tissue>
        <tissue>Liver</tissue>
        <tissue>Lung</tissue>
        <tissue>Spleen</tissue>
        <tissue>Testis</tissue>
    </source>
</reference>
<comment type="similarity">
    <text evidence="1">Belongs to the TTC9 family.</text>
</comment>
<protein>
    <recommendedName>
        <fullName>Tetratricopeptide repeat protein 9C</fullName>
        <shortName>TPR repeat protein 9C</shortName>
    </recommendedName>
</protein>
<feature type="chain" id="PRO_0000294467" description="Tetratricopeptide repeat protein 9C">
    <location>
        <begin position="1"/>
        <end position="171"/>
    </location>
</feature>
<feature type="repeat" description="TPR 1">
    <location>
        <begin position="8"/>
        <end position="41"/>
    </location>
</feature>
<feature type="repeat" description="TPR 2">
    <location>
        <begin position="72"/>
        <end position="107"/>
    </location>
</feature>
<feature type="repeat" description="TPR 3">
    <location>
        <begin position="108"/>
        <end position="141"/>
    </location>
</feature>
<feature type="sequence conflict" description="In Ref. 1; BAB25875." evidence="1" ref="1">
    <original>N</original>
    <variation>Y</variation>
    <location>
        <position position="89"/>
    </location>
</feature>
<accession>Q810A3</accession>
<accession>Q9D7W8</accession>
<name>TTC9C_MOUSE</name>
<sequence length="171" mass="19998">MEKRLQEAQVYKEEGNQRYREGKYRDAVSRYHRALLQLRGLDPSLPSPLSSLGPQGPALTPEQENILHTIQTHCYNNLAACLLQMEPVNYERVREYSQKVLERQPDNAKALYRAGVAFFHLQDYDRARHHLLAAVNRQPKDANVRRYLQLTQSELSSYHRKEKQLYLGMFG</sequence>
<gene>
    <name type="primary">Ttc9c</name>
</gene>
<dbReference type="EMBL" id="AK008753">
    <property type="protein sequence ID" value="BAB25875.1"/>
    <property type="molecule type" value="mRNA"/>
</dbReference>
<dbReference type="EMBL" id="AK169288">
    <property type="protein sequence ID" value="BAE41045.1"/>
    <property type="molecule type" value="mRNA"/>
</dbReference>
<dbReference type="EMBL" id="AK169296">
    <property type="protein sequence ID" value="BAE41052.1"/>
    <property type="molecule type" value="mRNA"/>
</dbReference>
<dbReference type="EMBL" id="BC043061">
    <property type="protein sequence ID" value="AAH43061.1"/>
    <property type="molecule type" value="mRNA"/>
</dbReference>
<dbReference type="EMBL" id="BC058967">
    <property type="protein sequence ID" value="AAH58967.1"/>
    <property type="molecule type" value="mRNA"/>
</dbReference>
<dbReference type="CCDS" id="CCDS29549.1"/>
<dbReference type="RefSeq" id="NP_081688.2">
    <property type="nucleotide sequence ID" value="NM_027412.3"/>
</dbReference>
<dbReference type="RefSeq" id="XP_036017577.1">
    <property type="nucleotide sequence ID" value="XM_036161684.1"/>
</dbReference>
<dbReference type="SMR" id="Q810A3"/>
<dbReference type="BioGRID" id="214020">
    <property type="interactions" value="1"/>
</dbReference>
<dbReference type="FunCoup" id="Q810A3">
    <property type="interactions" value="265"/>
</dbReference>
<dbReference type="STRING" id="10090.ENSMUSP00000094513"/>
<dbReference type="iPTMnet" id="Q810A3"/>
<dbReference type="PhosphoSitePlus" id="Q810A3"/>
<dbReference type="PaxDb" id="10090-ENSMUSP00000094513"/>
<dbReference type="PeptideAtlas" id="Q810A3"/>
<dbReference type="ProteomicsDB" id="297750"/>
<dbReference type="Pumba" id="Q810A3"/>
<dbReference type="Antibodypedia" id="43795">
    <property type="antibodies" value="102 antibodies from 16 providers"/>
</dbReference>
<dbReference type="DNASU" id="70387"/>
<dbReference type="Ensembl" id="ENSMUST00000088092.6">
    <property type="protein sequence ID" value="ENSMUSP00000085413.6"/>
    <property type="gene ID" value="ENSMUSG00000071660.11"/>
</dbReference>
<dbReference type="Ensembl" id="ENSMUST00000096751.11">
    <property type="protein sequence ID" value="ENSMUSP00000094513.5"/>
    <property type="gene ID" value="ENSMUSG00000071660.11"/>
</dbReference>
<dbReference type="GeneID" id="70387"/>
<dbReference type="KEGG" id="mmu:70387"/>
<dbReference type="UCSC" id="uc008gnd.1">
    <property type="organism name" value="mouse"/>
</dbReference>
<dbReference type="AGR" id="MGI:1917637"/>
<dbReference type="CTD" id="283237"/>
<dbReference type="MGI" id="MGI:1917637">
    <property type="gene designation" value="Ttc9c"/>
</dbReference>
<dbReference type="VEuPathDB" id="HostDB:ENSMUSG00000071660"/>
<dbReference type="eggNOG" id="ENOG502RXZG">
    <property type="taxonomic scope" value="Eukaryota"/>
</dbReference>
<dbReference type="GeneTree" id="ENSGT00940000161805"/>
<dbReference type="HOGENOM" id="CLU_100621_1_0_1"/>
<dbReference type="InParanoid" id="Q810A3"/>
<dbReference type="OMA" id="KIYANMS"/>
<dbReference type="OrthoDB" id="433738at2759"/>
<dbReference type="PhylomeDB" id="Q810A3"/>
<dbReference type="TreeFam" id="TF331917"/>
<dbReference type="BioGRID-ORCS" id="70387">
    <property type="hits" value="2 hits in 78 CRISPR screens"/>
</dbReference>
<dbReference type="ChiTaRS" id="Ttc9c">
    <property type="organism name" value="mouse"/>
</dbReference>
<dbReference type="PRO" id="PR:Q810A3"/>
<dbReference type="Proteomes" id="UP000000589">
    <property type="component" value="Chromosome 19"/>
</dbReference>
<dbReference type="RNAct" id="Q810A3">
    <property type="molecule type" value="protein"/>
</dbReference>
<dbReference type="Bgee" id="ENSMUSG00000071660">
    <property type="expression patterns" value="Expressed in manus and 222 other cell types or tissues"/>
</dbReference>
<dbReference type="ExpressionAtlas" id="Q810A3">
    <property type="expression patterns" value="baseline and differential"/>
</dbReference>
<dbReference type="Gene3D" id="1.25.40.10">
    <property type="entry name" value="Tetratricopeptide repeat domain"/>
    <property type="match status" value="1"/>
</dbReference>
<dbReference type="InterPro" id="IPR039663">
    <property type="entry name" value="AIP/AIPL1/TTC9"/>
</dbReference>
<dbReference type="InterPro" id="IPR011990">
    <property type="entry name" value="TPR-like_helical_dom_sf"/>
</dbReference>
<dbReference type="InterPro" id="IPR019734">
    <property type="entry name" value="TPR_rpt"/>
</dbReference>
<dbReference type="PANTHER" id="PTHR11242">
    <property type="entry name" value="ARYL HYDROCARBON RECEPTOR INTERACTING PROTEIN RELATED"/>
    <property type="match status" value="1"/>
</dbReference>
<dbReference type="PANTHER" id="PTHR11242:SF14">
    <property type="entry name" value="TETRATRICOPEPTIDE REPEAT PROTEIN 9C"/>
    <property type="match status" value="1"/>
</dbReference>
<dbReference type="Pfam" id="PF14559">
    <property type="entry name" value="TPR_19"/>
    <property type="match status" value="1"/>
</dbReference>
<dbReference type="SMART" id="SM00028">
    <property type="entry name" value="TPR"/>
    <property type="match status" value="3"/>
</dbReference>
<dbReference type="SUPFAM" id="SSF48452">
    <property type="entry name" value="TPR-like"/>
    <property type="match status" value="1"/>
</dbReference>
<dbReference type="PROSITE" id="PS50005">
    <property type="entry name" value="TPR"/>
    <property type="match status" value="2"/>
</dbReference>
<dbReference type="PROSITE" id="PS50293">
    <property type="entry name" value="TPR_REGION"/>
    <property type="match status" value="2"/>
</dbReference>
<proteinExistence type="evidence at protein level"/>
<organism>
    <name type="scientific">Mus musculus</name>
    <name type="common">Mouse</name>
    <dbReference type="NCBI Taxonomy" id="10090"/>
    <lineage>
        <taxon>Eukaryota</taxon>
        <taxon>Metazoa</taxon>
        <taxon>Chordata</taxon>
        <taxon>Craniata</taxon>
        <taxon>Vertebrata</taxon>
        <taxon>Euteleostomi</taxon>
        <taxon>Mammalia</taxon>
        <taxon>Eutheria</taxon>
        <taxon>Euarchontoglires</taxon>
        <taxon>Glires</taxon>
        <taxon>Rodentia</taxon>
        <taxon>Myomorpha</taxon>
        <taxon>Muroidea</taxon>
        <taxon>Muridae</taxon>
        <taxon>Murinae</taxon>
        <taxon>Mus</taxon>
        <taxon>Mus</taxon>
    </lineage>
</organism>
<evidence type="ECO:0000305" key="1"/>
<keyword id="KW-1185">Reference proteome</keyword>
<keyword id="KW-0677">Repeat</keyword>
<keyword id="KW-0802">TPR repeat</keyword>